<name>NUOC_FRATT</name>
<keyword id="KW-0997">Cell inner membrane</keyword>
<keyword id="KW-1003">Cell membrane</keyword>
<keyword id="KW-0472">Membrane</keyword>
<keyword id="KW-0520">NAD</keyword>
<keyword id="KW-0874">Quinone</keyword>
<keyword id="KW-1185">Reference proteome</keyword>
<keyword id="KW-1278">Translocase</keyword>
<keyword id="KW-0813">Transport</keyword>
<keyword id="KW-0830">Ubiquinone</keyword>
<organism>
    <name type="scientific">Francisella tularensis subsp. tularensis (strain SCHU S4 / Schu 4)</name>
    <dbReference type="NCBI Taxonomy" id="177416"/>
    <lineage>
        <taxon>Bacteria</taxon>
        <taxon>Pseudomonadati</taxon>
        <taxon>Pseudomonadota</taxon>
        <taxon>Gammaproteobacteria</taxon>
        <taxon>Thiotrichales</taxon>
        <taxon>Francisellaceae</taxon>
        <taxon>Francisella</taxon>
    </lineage>
</organism>
<dbReference type="EC" id="7.1.1.-" evidence="1"/>
<dbReference type="EMBL" id="AJ749949">
    <property type="protein sequence ID" value="CAG44666.1"/>
    <property type="molecule type" value="Genomic_DNA"/>
</dbReference>
<dbReference type="RefSeq" id="YP_169109.1">
    <property type="nucleotide sequence ID" value="NC_006570.2"/>
</dbReference>
<dbReference type="SMR" id="Q5NIN3"/>
<dbReference type="STRING" id="177416.FTT_0033"/>
<dbReference type="DNASU" id="3192334"/>
<dbReference type="EnsemblBacteria" id="CAG44666">
    <property type="protein sequence ID" value="CAG44666"/>
    <property type="gene ID" value="FTT_0033"/>
</dbReference>
<dbReference type="KEGG" id="ftu:FTT_0033"/>
<dbReference type="PATRIC" id="fig|177416.18.peg.36"/>
<dbReference type="eggNOG" id="COG0852">
    <property type="taxonomic scope" value="Bacteria"/>
</dbReference>
<dbReference type="OrthoDB" id="9803286at2"/>
<dbReference type="Proteomes" id="UP000001174">
    <property type="component" value="Chromosome"/>
</dbReference>
<dbReference type="GO" id="GO:0005886">
    <property type="term" value="C:plasma membrane"/>
    <property type="evidence" value="ECO:0007669"/>
    <property type="project" value="UniProtKB-SubCell"/>
</dbReference>
<dbReference type="GO" id="GO:0008137">
    <property type="term" value="F:NADH dehydrogenase (ubiquinone) activity"/>
    <property type="evidence" value="ECO:0007669"/>
    <property type="project" value="InterPro"/>
</dbReference>
<dbReference type="GO" id="GO:0050136">
    <property type="term" value="F:NADH:ubiquinone reductase (non-electrogenic) activity"/>
    <property type="evidence" value="ECO:0007669"/>
    <property type="project" value="UniProtKB-UniRule"/>
</dbReference>
<dbReference type="GO" id="GO:0048038">
    <property type="term" value="F:quinone binding"/>
    <property type="evidence" value="ECO:0007669"/>
    <property type="project" value="UniProtKB-KW"/>
</dbReference>
<dbReference type="Gene3D" id="3.30.460.80">
    <property type="entry name" value="NADH:ubiquinone oxidoreductase, 30kDa subunit"/>
    <property type="match status" value="1"/>
</dbReference>
<dbReference type="HAMAP" id="MF_01357">
    <property type="entry name" value="NDH1_NuoC"/>
    <property type="match status" value="1"/>
</dbReference>
<dbReference type="InterPro" id="IPR010218">
    <property type="entry name" value="NADH_DH_suC"/>
</dbReference>
<dbReference type="InterPro" id="IPR037232">
    <property type="entry name" value="NADH_quin_OxRdtase_su_C/D-like"/>
</dbReference>
<dbReference type="InterPro" id="IPR001268">
    <property type="entry name" value="NADH_UbQ_OxRdtase_30kDa_su"/>
</dbReference>
<dbReference type="InterPro" id="IPR020396">
    <property type="entry name" value="NADH_UbQ_OxRdtase_CS"/>
</dbReference>
<dbReference type="NCBIfam" id="TIGR01961">
    <property type="entry name" value="NuoC_fam"/>
    <property type="match status" value="1"/>
</dbReference>
<dbReference type="NCBIfam" id="NF004730">
    <property type="entry name" value="PRK06074.1-1"/>
    <property type="match status" value="1"/>
</dbReference>
<dbReference type="PANTHER" id="PTHR10884:SF14">
    <property type="entry name" value="NADH DEHYDROGENASE [UBIQUINONE] IRON-SULFUR PROTEIN 3, MITOCHONDRIAL"/>
    <property type="match status" value="1"/>
</dbReference>
<dbReference type="PANTHER" id="PTHR10884">
    <property type="entry name" value="NADH DEHYDROGENASE UBIQUINONE IRON-SULFUR PROTEIN 3"/>
    <property type="match status" value="1"/>
</dbReference>
<dbReference type="Pfam" id="PF00329">
    <property type="entry name" value="Complex1_30kDa"/>
    <property type="match status" value="1"/>
</dbReference>
<dbReference type="SUPFAM" id="SSF143243">
    <property type="entry name" value="Nqo5-like"/>
    <property type="match status" value="1"/>
</dbReference>
<dbReference type="PROSITE" id="PS00542">
    <property type="entry name" value="COMPLEX1_30K"/>
    <property type="match status" value="1"/>
</dbReference>
<accession>Q5NIN3</accession>
<proteinExistence type="inferred from homology"/>
<reference key="1">
    <citation type="journal article" date="2005" name="Nat. Genet.">
        <title>The complete genome sequence of Francisella tularensis, the causative agent of tularemia.</title>
        <authorList>
            <person name="Larsson P."/>
            <person name="Oyston P.C.F."/>
            <person name="Chain P."/>
            <person name="Chu M.C."/>
            <person name="Duffield M."/>
            <person name="Fuxelius H.-H."/>
            <person name="Garcia E."/>
            <person name="Haelltorp G."/>
            <person name="Johansson D."/>
            <person name="Isherwood K.E."/>
            <person name="Karp P.D."/>
            <person name="Larsson E."/>
            <person name="Liu Y."/>
            <person name="Michell S."/>
            <person name="Prior J."/>
            <person name="Prior R."/>
            <person name="Malfatti S."/>
            <person name="Sjoestedt A."/>
            <person name="Svensson K."/>
            <person name="Thompson N."/>
            <person name="Vergez L."/>
            <person name="Wagg J.K."/>
            <person name="Wren B.W."/>
            <person name="Lindler L.E."/>
            <person name="Andersson S.G.E."/>
            <person name="Forsman M."/>
            <person name="Titball R.W."/>
        </authorList>
    </citation>
    <scope>NUCLEOTIDE SEQUENCE [LARGE SCALE GENOMIC DNA]</scope>
    <source>
        <strain>SCHU S4 / Schu 4</strain>
    </source>
</reference>
<sequence>MIVSTKLQDHFDKITKILSGFGVEGCISYGEITFSIRDQRDIHLILKKLKKEYLFEQLTDVTAVDYLTYGQSDWQVGKVVSQTGFSRGRQQDFKTAAVDNRFEIIYQLLSMANNVRIRVKCKLKDAQIILVDSVSDLWPSANWAEREVYDMFGIYFNNHPDLRRVLTDYGFVGHPLRKDFPQTGYVEMRYDENLGRVVYEPVEIDDRVNTPRVIRN</sequence>
<protein>
    <recommendedName>
        <fullName evidence="1">NADH-quinone oxidoreductase subunit C</fullName>
        <ecNumber evidence="1">7.1.1.-</ecNumber>
    </recommendedName>
    <alternativeName>
        <fullName evidence="1">NADH dehydrogenase I subunit C</fullName>
    </alternativeName>
    <alternativeName>
        <fullName evidence="1">NDH-1 subunit C</fullName>
    </alternativeName>
</protein>
<evidence type="ECO:0000255" key="1">
    <source>
        <dbReference type="HAMAP-Rule" id="MF_01357"/>
    </source>
</evidence>
<comment type="function">
    <text evidence="1">NDH-1 shuttles electrons from NADH, via FMN and iron-sulfur (Fe-S) centers, to quinones in the respiratory chain. The immediate electron acceptor for the enzyme in this species is believed to be ubiquinone. Couples the redox reaction to proton translocation (for every two electrons transferred, four hydrogen ions are translocated across the cytoplasmic membrane), and thus conserves the redox energy in a proton gradient.</text>
</comment>
<comment type="catalytic activity">
    <reaction evidence="1">
        <text>a quinone + NADH + 5 H(+)(in) = a quinol + NAD(+) + 4 H(+)(out)</text>
        <dbReference type="Rhea" id="RHEA:57888"/>
        <dbReference type="ChEBI" id="CHEBI:15378"/>
        <dbReference type="ChEBI" id="CHEBI:24646"/>
        <dbReference type="ChEBI" id="CHEBI:57540"/>
        <dbReference type="ChEBI" id="CHEBI:57945"/>
        <dbReference type="ChEBI" id="CHEBI:132124"/>
    </reaction>
</comment>
<comment type="subunit">
    <text evidence="1">NDH-1 is composed of 14 different subunits. Subunits NuoB, C, D, E, F, and G constitute the peripheral sector of the complex.</text>
</comment>
<comment type="subcellular location">
    <subcellularLocation>
        <location evidence="1">Cell inner membrane</location>
        <topology evidence="1">Peripheral membrane protein</topology>
        <orientation evidence="1">Cytoplasmic side</orientation>
    </subcellularLocation>
</comment>
<comment type="similarity">
    <text evidence="1">Belongs to the complex I 30 kDa subunit family.</text>
</comment>
<gene>
    <name evidence="1" type="primary">nuoC</name>
    <name type="ordered locus">FTT_0033</name>
</gene>
<feature type="chain" id="PRO_0000358101" description="NADH-quinone oxidoreductase subunit C">
    <location>
        <begin position="1"/>
        <end position="216"/>
    </location>
</feature>